<proteinExistence type="evidence at protein level"/>
<protein>
    <recommendedName>
        <fullName evidence="1">Small ribosomal subunit biogenesis GTPase RsgA</fullName>
        <ecNumber evidence="1">3.6.1.-</ecNumber>
    </recommendedName>
</protein>
<comment type="function">
    <text evidence="1">One of several proteins that assist in the late maturation steps of the functional core of the 30S ribosomal subunit. Helps release RbfA from mature subunits. May play a role in the assembly of ribosomal proteins into the subunit. Circularly permuted GTPase that catalyzes slow GTP hydrolysis, GTPase activity is stimulated by the 30S ribosomal subunit.</text>
</comment>
<comment type="cofactor">
    <cofactor evidence="1">
        <name>Zn(2+)</name>
        <dbReference type="ChEBI" id="CHEBI:29105"/>
    </cofactor>
    <text evidence="1">Binds 1 zinc ion per subunit.</text>
</comment>
<comment type="subunit">
    <text evidence="1">Monomer. Associates with 30S ribosomal subunit, binds 16S rRNA.</text>
</comment>
<comment type="subcellular location">
    <subcellularLocation>
        <location evidence="1">Cytoplasm</location>
    </subcellularLocation>
</comment>
<comment type="similarity">
    <text evidence="1">Belongs to the TRAFAC class YlqF/YawG GTPase family. RsgA subfamily.</text>
</comment>
<gene>
    <name evidence="1" type="primary">rsgA</name>
    <name type="ordered locus">PA4952</name>
</gene>
<keyword id="KW-0002">3D-structure</keyword>
<keyword id="KW-0963">Cytoplasm</keyword>
<keyword id="KW-0342">GTP-binding</keyword>
<keyword id="KW-0378">Hydrolase</keyword>
<keyword id="KW-0479">Metal-binding</keyword>
<keyword id="KW-0547">Nucleotide-binding</keyword>
<keyword id="KW-1185">Reference proteome</keyword>
<keyword id="KW-0690">Ribosome biogenesis</keyword>
<keyword id="KW-0694">RNA-binding</keyword>
<keyword id="KW-0699">rRNA-binding</keyword>
<keyword id="KW-0862">Zinc</keyword>
<dbReference type="EC" id="3.6.1.-" evidence="1"/>
<dbReference type="EMBL" id="AE004091">
    <property type="protein sequence ID" value="AAG08337.1"/>
    <property type="molecule type" value="Genomic_DNA"/>
</dbReference>
<dbReference type="PIR" id="F83026">
    <property type="entry name" value="F83026"/>
</dbReference>
<dbReference type="RefSeq" id="NP_253639.1">
    <property type="nucleotide sequence ID" value="NC_002516.2"/>
</dbReference>
<dbReference type="RefSeq" id="WP_003113927.1">
    <property type="nucleotide sequence ID" value="NZ_QZGE01000002.1"/>
</dbReference>
<dbReference type="PDB" id="6H4D">
    <property type="method" value="X-ray"/>
    <property type="resolution" value="2.90 A"/>
    <property type="chains" value="A=1-339"/>
</dbReference>
<dbReference type="PDBsum" id="6H4D"/>
<dbReference type="SMR" id="Q9HUL3"/>
<dbReference type="FunCoup" id="Q9HUL3">
    <property type="interactions" value="428"/>
</dbReference>
<dbReference type="STRING" id="208964.PA4952"/>
<dbReference type="PaxDb" id="208964-PA4952"/>
<dbReference type="GeneID" id="878216"/>
<dbReference type="KEGG" id="pae:PA4952"/>
<dbReference type="PATRIC" id="fig|208964.12.peg.5185"/>
<dbReference type="PseudoCAP" id="PA4952"/>
<dbReference type="HOGENOM" id="CLU_033617_2_0_6"/>
<dbReference type="InParanoid" id="Q9HUL3"/>
<dbReference type="OrthoDB" id="9809485at2"/>
<dbReference type="PhylomeDB" id="Q9HUL3"/>
<dbReference type="BioCyc" id="PAER208964:G1FZ6-5068-MONOMER"/>
<dbReference type="Proteomes" id="UP000002438">
    <property type="component" value="Chromosome"/>
</dbReference>
<dbReference type="GO" id="GO:0005737">
    <property type="term" value="C:cytoplasm"/>
    <property type="evidence" value="ECO:0007669"/>
    <property type="project" value="UniProtKB-SubCell"/>
</dbReference>
<dbReference type="GO" id="GO:0005525">
    <property type="term" value="F:GTP binding"/>
    <property type="evidence" value="ECO:0007669"/>
    <property type="project" value="UniProtKB-UniRule"/>
</dbReference>
<dbReference type="GO" id="GO:0003924">
    <property type="term" value="F:GTPase activity"/>
    <property type="evidence" value="ECO:0007669"/>
    <property type="project" value="UniProtKB-UniRule"/>
</dbReference>
<dbReference type="GO" id="GO:0046872">
    <property type="term" value="F:metal ion binding"/>
    <property type="evidence" value="ECO:0007669"/>
    <property type="project" value="UniProtKB-KW"/>
</dbReference>
<dbReference type="GO" id="GO:0019843">
    <property type="term" value="F:rRNA binding"/>
    <property type="evidence" value="ECO:0007669"/>
    <property type="project" value="UniProtKB-KW"/>
</dbReference>
<dbReference type="GO" id="GO:0042274">
    <property type="term" value="P:ribosomal small subunit biogenesis"/>
    <property type="evidence" value="ECO:0007669"/>
    <property type="project" value="UniProtKB-UniRule"/>
</dbReference>
<dbReference type="CDD" id="cd01854">
    <property type="entry name" value="YjeQ_EngC"/>
    <property type="match status" value="1"/>
</dbReference>
<dbReference type="Gene3D" id="2.40.50.140">
    <property type="entry name" value="Nucleic acid-binding proteins"/>
    <property type="match status" value="1"/>
</dbReference>
<dbReference type="Gene3D" id="3.40.50.300">
    <property type="entry name" value="P-loop containing nucleotide triphosphate hydrolases"/>
    <property type="match status" value="1"/>
</dbReference>
<dbReference type="Gene3D" id="1.10.40.50">
    <property type="entry name" value="Probable gtpase engc, domain 3"/>
    <property type="match status" value="1"/>
</dbReference>
<dbReference type="HAMAP" id="MF_01820">
    <property type="entry name" value="GTPase_RsgA"/>
    <property type="match status" value="1"/>
</dbReference>
<dbReference type="InterPro" id="IPR030378">
    <property type="entry name" value="G_CP_dom"/>
</dbReference>
<dbReference type="InterPro" id="IPR012340">
    <property type="entry name" value="NA-bd_OB-fold"/>
</dbReference>
<dbReference type="InterPro" id="IPR027417">
    <property type="entry name" value="P-loop_NTPase"/>
</dbReference>
<dbReference type="InterPro" id="IPR004881">
    <property type="entry name" value="Ribosome_biogen_GTPase_RsgA"/>
</dbReference>
<dbReference type="InterPro" id="IPR010914">
    <property type="entry name" value="RsgA_GTPase_dom"/>
</dbReference>
<dbReference type="NCBIfam" id="NF008931">
    <property type="entry name" value="PRK12288.1"/>
    <property type="match status" value="1"/>
</dbReference>
<dbReference type="NCBIfam" id="TIGR00157">
    <property type="entry name" value="ribosome small subunit-dependent GTPase A"/>
    <property type="match status" value="1"/>
</dbReference>
<dbReference type="PANTHER" id="PTHR32120">
    <property type="entry name" value="SMALL RIBOSOMAL SUBUNIT BIOGENESIS GTPASE RSGA"/>
    <property type="match status" value="1"/>
</dbReference>
<dbReference type="PANTHER" id="PTHR32120:SF11">
    <property type="entry name" value="SMALL RIBOSOMAL SUBUNIT BIOGENESIS GTPASE RSGA 1, MITOCHONDRIAL-RELATED"/>
    <property type="match status" value="1"/>
</dbReference>
<dbReference type="Pfam" id="PF03193">
    <property type="entry name" value="RsgA_GTPase"/>
    <property type="match status" value="1"/>
</dbReference>
<dbReference type="SUPFAM" id="SSF50249">
    <property type="entry name" value="Nucleic acid-binding proteins"/>
    <property type="match status" value="1"/>
</dbReference>
<dbReference type="SUPFAM" id="SSF52540">
    <property type="entry name" value="P-loop containing nucleoside triphosphate hydrolases"/>
    <property type="match status" value="1"/>
</dbReference>
<dbReference type="PROSITE" id="PS50936">
    <property type="entry name" value="ENGC_GTPASE"/>
    <property type="match status" value="1"/>
</dbReference>
<dbReference type="PROSITE" id="PS51721">
    <property type="entry name" value="G_CP"/>
    <property type="match status" value="1"/>
</dbReference>
<sequence length="339" mass="37078">MAKRHLTRRQSWRIEKIQEERAARAARRESRAVEELEGGDLGPEQTGQVIAHFGVQVEVESADGQVSRCHLRANLPALVTGDQVVWRAGNQGIGVIVAQLPRRSELCRPDMRGLLKPVAANVDRIVIVFAPRPEPHANLIDRYLIAAEHAGIQPLLLLNKADLVDESNAEGIDALLNVYRTLGYPLIEVSAFNGLAMDELRGALDGHVSVFVGQSGVGKSSLVNALLPGVDTRVGDLSTVTGKGTHTTTTARLFHFPGGGDLIDSPGIREFGLGHVSRDDVEAGFIEFRDLLGHCRFRDCKHDREPGCALLQALEDGRIMPQRMASYRHILASMPETDY</sequence>
<reference key="1">
    <citation type="journal article" date="2000" name="Nature">
        <title>Complete genome sequence of Pseudomonas aeruginosa PAO1, an opportunistic pathogen.</title>
        <authorList>
            <person name="Stover C.K."/>
            <person name="Pham X.-Q.T."/>
            <person name="Erwin A.L."/>
            <person name="Mizoguchi S.D."/>
            <person name="Warrener P."/>
            <person name="Hickey M.J."/>
            <person name="Brinkman F.S.L."/>
            <person name="Hufnagle W.O."/>
            <person name="Kowalik D.J."/>
            <person name="Lagrou M."/>
            <person name="Garber R.L."/>
            <person name="Goltry L."/>
            <person name="Tolentino E."/>
            <person name="Westbrock-Wadman S."/>
            <person name="Yuan Y."/>
            <person name="Brody L.L."/>
            <person name="Coulter S.N."/>
            <person name="Folger K.R."/>
            <person name="Kas A."/>
            <person name="Larbig K."/>
            <person name="Lim R.M."/>
            <person name="Smith K.A."/>
            <person name="Spencer D.H."/>
            <person name="Wong G.K.-S."/>
            <person name="Wu Z."/>
            <person name="Paulsen I.T."/>
            <person name="Reizer J."/>
            <person name="Saier M.H. Jr."/>
            <person name="Hancock R.E.W."/>
            <person name="Lory S."/>
            <person name="Olson M.V."/>
        </authorList>
    </citation>
    <scope>NUCLEOTIDE SEQUENCE [LARGE SCALE GENOMIC DNA]</scope>
    <source>
        <strain>ATCC 15692 / DSM 22644 / CIP 104116 / JCM 14847 / LMG 12228 / 1C / PRS 101 / PAO1</strain>
    </source>
</reference>
<accession>Q9HUL3</accession>
<organism>
    <name type="scientific">Pseudomonas aeruginosa (strain ATCC 15692 / DSM 22644 / CIP 104116 / JCM 14847 / LMG 12228 / 1C / PRS 101 / PAO1)</name>
    <dbReference type="NCBI Taxonomy" id="208964"/>
    <lineage>
        <taxon>Bacteria</taxon>
        <taxon>Pseudomonadati</taxon>
        <taxon>Pseudomonadota</taxon>
        <taxon>Gammaproteobacteria</taxon>
        <taxon>Pseudomonadales</taxon>
        <taxon>Pseudomonadaceae</taxon>
        <taxon>Pseudomonas</taxon>
    </lineage>
</organism>
<name>RSGA_PSEAE</name>
<evidence type="ECO:0000255" key="1">
    <source>
        <dbReference type="HAMAP-Rule" id="MF_01820"/>
    </source>
</evidence>
<evidence type="ECO:0000255" key="2">
    <source>
        <dbReference type="PROSITE-ProRule" id="PRU01058"/>
    </source>
</evidence>
<evidence type="ECO:0007829" key="3">
    <source>
        <dbReference type="PDB" id="6H4D"/>
    </source>
</evidence>
<feature type="chain" id="PRO_0000171505" description="Small ribosomal subunit biogenesis GTPase RsgA">
    <location>
        <begin position="1"/>
        <end position="339"/>
    </location>
</feature>
<feature type="domain" description="CP-type G" evidence="2">
    <location>
        <begin position="111"/>
        <end position="271"/>
    </location>
</feature>
<feature type="binding site" evidence="1">
    <location>
        <begin position="159"/>
        <end position="162"/>
    </location>
    <ligand>
        <name>GTP</name>
        <dbReference type="ChEBI" id="CHEBI:37565"/>
    </ligand>
</feature>
<feature type="binding site" evidence="1">
    <location>
        <begin position="213"/>
        <end position="221"/>
    </location>
    <ligand>
        <name>GTP</name>
        <dbReference type="ChEBI" id="CHEBI:37565"/>
    </ligand>
</feature>
<feature type="binding site" evidence="1">
    <location>
        <position position="295"/>
    </location>
    <ligand>
        <name>Zn(2+)</name>
        <dbReference type="ChEBI" id="CHEBI:29105"/>
    </ligand>
</feature>
<feature type="binding site" evidence="1">
    <location>
        <position position="300"/>
    </location>
    <ligand>
        <name>Zn(2+)</name>
        <dbReference type="ChEBI" id="CHEBI:29105"/>
    </ligand>
</feature>
<feature type="binding site" evidence="1">
    <location>
        <position position="302"/>
    </location>
    <ligand>
        <name>Zn(2+)</name>
        <dbReference type="ChEBI" id="CHEBI:29105"/>
    </ligand>
</feature>
<feature type="binding site" evidence="1">
    <location>
        <position position="308"/>
    </location>
    <ligand>
        <name>Zn(2+)</name>
        <dbReference type="ChEBI" id="CHEBI:29105"/>
    </ligand>
</feature>
<feature type="strand" evidence="3">
    <location>
        <begin position="44"/>
        <end position="53"/>
    </location>
</feature>
<feature type="strand" evidence="3">
    <location>
        <begin position="56"/>
        <end position="61"/>
    </location>
</feature>
<feature type="strand" evidence="3">
    <location>
        <begin position="66"/>
        <end position="71"/>
    </location>
</feature>
<feature type="strand" evidence="3">
    <location>
        <begin position="83"/>
        <end position="87"/>
    </location>
</feature>
<feature type="strand" evidence="3">
    <location>
        <begin position="93"/>
        <end position="99"/>
    </location>
</feature>
<feature type="strand" evidence="3">
    <location>
        <begin position="105"/>
        <end position="109"/>
    </location>
</feature>
<feature type="strand" evidence="3">
    <location>
        <begin position="111"/>
        <end position="113"/>
    </location>
</feature>
<feature type="strand" evidence="3">
    <location>
        <begin position="115"/>
        <end position="120"/>
    </location>
</feature>
<feature type="strand" evidence="3">
    <location>
        <begin position="124"/>
        <end position="129"/>
    </location>
</feature>
<feature type="strand" evidence="3">
    <location>
        <begin position="131"/>
        <end position="133"/>
    </location>
</feature>
<feature type="helix" evidence="3">
    <location>
        <begin position="137"/>
        <end position="149"/>
    </location>
</feature>
<feature type="strand" evidence="3">
    <location>
        <begin position="153"/>
        <end position="158"/>
    </location>
</feature>
<feature type="helix" evidence="3">
    <location>
        <begin position="161"/>
        <end position="163"/>
    </location>
</feature>
<feature type="helix" evidence="3">
    <location>
        <begin position="166"/>
        <end position="180"/>
    </location>
</feature>
<feature type="turn" evidence="3">
    <location>
        <begin position="181"/>
        <end position="183"/>
    </location>
</feature>
<feature type="strand" evidence="3">
    <location>
        <begin position="186"/>
        <end position="188"/>
    </location>
</feature>
<feature type="turn" evidence="3">
    <location>
        <begin position="191"/>
        <end position="193"/>
    </location>
</feature>
<feature type="helix" evidence="3">
    <location>
        <begin position="197"/>
        <end position="204"/>
    </location>
</feature>
<feature type="strand" evidence="3">
    <location>
        <begin position="207"/>
        <end position="212"/>
    </location>
</feature>
<feature type="helix" evidence="3">
    <location>
        <begin position="219"/>
        <end position="226"/>
    </location>
</feature>
<feature type="strand" evidence="3">
    <location>
        <begin position="252"/>
        <end position="255"/>
    </location>
</feature>
<feature type="strand" evidence="3">
    <location>
        <begin position="257"/>
        <end position="259"/>
    </location>
</feature>
<feature type="strand" evidence="3">
    <location>
        <begin position="261"/>
        <end position="264"/>
    </location>
</feature>
<feature type="helix" evidence="3">
    <location>
        <begin position="266"/>
        <end position="269"/>
    </location>
</feature>
<feature type="helix" evidence="3">
    <location>
        <begin position="278"/>
        <end position="283"/>
    </location>
</feature>
<feature type="helix" evidence="3">
    <location>
        <begin position="286"/>
        <end position="291"/>
    </location>
</feature>
<feature type="strand" evidence="3">
    <location>
        <begin position="302"/>
        <end position="304"/>
    </location>
</feature>
<feature type="helix" evidence="3">
    <location>
        <begin position="309"/>
        <end position="316"/>
    </location>
</feature>
<feature type="helix" evidence="3">
    <location>
        <begin position="321"/>
        <end position="331"/>
    </location>
</feature>